<dbReference type="EMBL" id="L14777">
    <property type="protein sequence ID" value="AAA20898.1"/>
    <property type="molecule type" value="mRNA"/>
</dbReference>
<dbReference type="PIR" id="S43852">
    <property type="entry name" value="S43852"/>
</dbReference>
<dbReference type="SMR" id="P21259"/>
<dbReference type="GO" id="GO:0005576">
    <property type="term" value="C:extracellular region"/>
    <property type="evidence" value="ECO:0007669"/>
    <property type="project" value="UniProtKB-SubCell"/>
</dbReference>
<dbReference type="GO" id="GO:0007218">
    <property type="term" value="P:neuropeptide signaling pathway"/>
    <property type="evidence" value="ECO:0007669"/>
    <property type="project" value="UniProtKB-KW"/>
</dbReference>
<dbReference type="InterPro" id="IPR002544">
    <property type="entry name" value="FMRFamid-related_peptide-like"/>
</dbReference>
<dbReference type="Pfam" id="PF01581">
    <property type="entry name" value="FARP"/>
    <property type="match status" value="11"/>
</dbReference>
<reference key="1">
    <citation type="journal article" date="1994" name="Biochem. J.">
        <title>The primary structure of the Pol-RFamide neuropeptide precursor protein from the hydromedusa Polyorchis penicillatus indicates a novel processing proteinase activity.</title>
        <authorList>
            <person name="Schmutzler C."/>
            <person name="Diekhoff D."/>
            <person name="Grimmelikhuijzen C.J.P."/>
        </authorList>
    </citation>
    <scope>NUCLEOTIDE SEQUENCE [MRNA]</scope>
    <scope>PYROGLUTAMATE FORMATION AT GLN-53; GLN-65; GLN-78; GLN-91; GLN-104; GLN-117; GLN-130; GLN-143; GLN-169; GLN-182; GLN-195; GLN-208 AND GLN-221</scope>
    <scope>AMIDATION AT PHE-59; PHE-71; PHE-84; PHE-97; PHE-110; PHE-123; PHE-136; PHE-149; PHE-175; PHE-188; HIS-201; PHE-214 AND PHE-227</scope>
</reference>
<reference key="2">
    <citation type="journal article" date="1988" name="Brain Res.">
        <title>Isolation of pyroGlu-Leu-Leu-Gly-Gly-Arg-Phe-NH2 (Pol-RFamide), a novel neuropeptide from hydromedusae.</title>
        <authorList>
            <person name="Grimmelikhuijzen C.J.P."/>
            <person name="Hahn M."/>
            <person name="Rinehart K.L. Jr."/>
            <person name="Spencer A.N."/>
        </authorList>
    </citation>
    <scope>PROTEIN SEQUENCE OF 182-188</scope>
    <scope>PYROGLUTAMATE FORMATION AT GLN-182</scope>
    <scope>AMIDATION AT PHE-188</scope>
</reference>
<evidence type="ECO:0000255" key="1"/>
<evidence type="ECO:0000256" key="2">
    <source>
        <dbReference type="SAM" id="MobiDB-lite"/>
    </source>
</evidence>
<evidence type="ECO:0000269" key="3">
    <source>
    </source>
</evidence>
<evidence type="ECO:0000269" key="4">
    <source>
    </source>
</evidence>
<evidence type="ECO:0000305" key="5"/>
<proteinExistence type="evidence at protein level"/>
<sequence>MNLITLLVLGVSTCLIYGIEADEKTSSALENEIVEILNGNFKNEKKSIETSDQWLKGRFGREVNQWLKGRFGRELSDQWLKGRFGRELSDQWLKGRFGREVLDQWLKGRFGRDASNQWLKGRFGRELSDQWLKGRFGREGSNQWLKGRFGREASKNDLEKQNGRGDSDQWLKGRFGREARKQLLGGRFGRKDMNQLLAERHGRETSDQWLKGRFGRQLSDQWLKGRFGREVKNDKNNPFRSRYTGDSTQLQRENNQPIEELRDNTEKVSIENKPIMKKTSVKISKTV</sequence>
<organism>
    <name type="scientific">Polyorchis penicillatus</name>
    <name type="common">Hydromedusa</name>
    <dbReference type="NCBI Taxonomy" id="6091"/>
    <lineage>
        <taxon>Eukaryota</taxon>
        <taxon>Metazoa</taxon>
        <taxon>Cnidaria</taxon>
        <taxon>Hydrozoa</taxon>
        <taxon>Hydroidolina</taxon>
        <taxon>Anthoathecata</taxon>
        <taxon>Capitata</taxon>
        <taxon>Polyorchidae</taxon>
        <taxon>Polyorchis</taxon>
    </lineage>
</organism>
<keyword id="KW-0027">Amidation</keyword>
<keyword id="KW-0165">Cleavage on pair of basic residues</keyword>
<keyword id="KW-0903">Direct protein sequencing</keyword>
<keyword id="KW-0527">Neuropeptide</keyword>
<keyword id="KW-0873">Pyrrolidone carboxylic acid</keyword>
<keyword id="KW-0964">Secreted</keyword>
<keyword id="KW-0732">Signal</keyword>
<name>PRFA_POLPE</name>
<protein>
    <recommendedName>
        <fullName>Pol-RFamide neuropeptides</fullName>
    </recommendedName>
    <component>
        <recommendedName>
            <fullName>Pol-RFamide-II</fullName>
        </recommendedName>
    </component>
    <component>
        <recommendedName>
            <fullName>Pol-RFamide-I</fullName>
        </recommendedName>
    </component>
    <component>
        <recommendedName>
            <fullName>Neuropeptide</fullName>
        </recommendedName>
    </component>
</protein>
<comment type="function">
    <text>Has direct action on motoneurons, and effect includes transient inhibition followed by prolonged excitation.</text>
</comment>
<comment type="subcellular location">
    <subcellularLocation>
        <location>Secreted</location>
    </subcellularLocation>
</comment>
<comment type="PTM">
    <text>The N-terminal processing sites of the Pol-RFamide peptides are acidic suggesting that cniderian nervous systems may use a variety of unconventional processing procedures.</text>
</comment>
<comment type="similarity">
    <text evidence="5">Belongs to the FARP (FMRFamide related peptide) family.</text>
</comment>
<accession>P21259</accession>
<feature type="signal peptide" evidence="1">
    <location>
        <begin position="1"/>
        <end position="21"/>
    </location>
</feature>
<feature type="propeptide" id="PRO_0000009753" evidence="3">
    <location>
        <begin position="22"/>
        <end position="52"/>
    </location>
</feature>
<feature type="peptide" id="PRO_0000009754" description="Pol-RFamide-II">
    <location>
        <begin position="53"/>
        <end position="59"/>
    </location>
</feature>
<feature type="propeptide" id="PRO_0000009755">
    <location>
        <begin position="62"/>
        <end position="64"/>
    </location>
</feature>
<feature type="peptide" id="PRO_0000009756" description="Pol-RFamide-II">
    <location>
        <begin position="65"/>
        <end position="71"/>
    </location>
</feature>
<feature type="propeptide" id="PRO_0000009757">
    <location>
        <begin position="74"/>
        <end position="77"/>
    </location>
</feature>
<feature type="peptide" id="PRO_0000009758" description="Pol-RFamide-II">
    <location>
        <begin position="78"/>
        <end position="84"/>
    </location>
</feature>
<feature type="propeptide" id="PRO_0000009759">
    <location>
        <begin position="87"/>
        <end position="90"/>
    </location>
</feature>
<feature type="peptide" id="PRO_0000009760" description="Pol-RFamide-II">
    <location>
        <begin position="91"/>
        <end position="97"/>
    </location>
</feature>
<feature type="propeptide" id="PRO_0000009761">
    <location>
        <begin position="100"/>
        <end position="103"/>
    </location>
</feature>
<feature type="peptide" id="PRO_0000009762" description="Pol-RFamide-II">
    <location>
        <begin position="104"/>
        <end position="110"/>
    </location>
</feature>
<feature type="propeptide" id="PRO_0000009763">
    <location>
        <begin position="113"/>
        <end position="116"/>
    </location>
</feature>
<feature type="peptide" id="PRO_0000009764" description="Pol-RFamide-II">
    <location>
        <begin position="117"/>
        <end position="123"/>
    </location>
</feature>
<feature type="propeptide" id="PRO_0000009765">
    <location>
        <begin position="126"/>
        <end position="129"/>
    </location>
</feature>
<feature type="peptide" id="PRO_0000009766" description="Pol-RFamide-II">
    <location>
        <begin position="130"/>
        <end position="136"/>
    </location>
</feature>
<feature type="propeptide" id="PRO_0000009767">
    <location>
        <begin position="139"/>
        <end position="142"/>
    </location>
</feature>
<feature type="peptide" id="PRO_0000009768" description="Pol-RFamide-II">
    <location>
        <begin position="143"/>
        <end position="149"/>
    </location>
</feature>
<feature type="propeptide" id="PRO_0000009769">
    <location>
        <begin position="152"/>
        <end position="168"/>
    </location>
</feature>
<feature type="peptide" id="PRO_0000009770" description="Pol-RFamide-II">
    <location>
        <begin position="169"/>
        <end position="175"/>
    </location>
</feature>
<feature type="propeptide" id="PRO_0000009771">
    <location>
        <begin position="178"/>
        <end position="181"/>
    </location>
</feature>
<feature type="peptide" id="PRO_0000009772" description="Pol-RFamide-I">
    <location>
        <begin position="182"/>
        <end position="188"/>
    </location>
</feature>
<feature type="propeptide" id="PRO_0000009773">
    <location>
        <begin position="192"/>
        <end position="194"/>
    </location>
</feature>
<feature type="peptide" id="PRO_0000009774" description="Neuropeptide">
    <location>
        <begin position="195"/>
        <end position="201"/>
    </location>
</feature>
<feature type="propeptide" id="PRO_0000009775">
    <location>
        <begin position="204"/>
        <end position="207"/>
    </location>
</feature>
<feature type="peptide" id="PRO_0000009776" description="Pol-RFamide-II">
    <location>
        <begin position="208"/>
        <end position="214"/>
    </location>
</feature>
<feature type="propeptide" id="PRO_0000009777">
    <location>
        <begin position="217"/>
        <end position="220"/>
    </location>
</feature>
<feature type="peptide" id="PRO_0000009778" description="Pol-RFamide-II">
    <location>
        <begin position="221"/>
        <end position="227"/>
    </location>
</feature>
<feature type="propeptide" id="PRO_0000009779">
    <location>
        <begin position="230"/>
        <end position="287"/>
    </location>
</feature>
<feature type="region of interest" description="Disordered" evidence="2">
    <location>
        <begin position="229"/>
        <end position="267"/>
    </location>
</feature>
<feature type="compositionally biased region" description="Polar residues" evidence="2">
    <location>
        <begin position="238"/>
        <end position="257"/>
    </location>
</feature>
<feature type="modified residue" description="Pyrrolidone carboxylic acid" evidence="4">
    <location>
        <position position="53"/>
    </location>
</feature>
<feature type="modified residue" description="Phenylalanine amide" evidence="4">
    <location>
        <position position="59"/>
    </location>
</feature>
<feature type="modified residue" description="Pyrrolidone carboxylic acid" evidence="4">
    <location>
        <position position="65"/>
    </location>
</feature>
<feature type="modified residue" description="Phenylalanine amide" evidence="4">
    <location>
        <position position="71"/>
    </location>
</feature>
<feature type="modified residue" description="Pyrrolidone carboxylic acid" evidence="4">
    <location>
        <position position="78"/>
    </location>
</feature>
<feature type="modified residue" description="Phenylalanine amide" evidence="4">
    <location>
        <position position="84"/>
    </location>
</feature>
<feature type="modified residue" description="Pyrrolidone carboxylic acid" evidence="4">
    <location>
        <position position="91"/>
    </location>
</feature>
<feature type="modified residue" description="Phenylalanine amide" evidence="4">
    <location>
        <position position="97"/>
    </location>
</feature>
<feature type="modified residue" description="Pyrrolidone carboxylic acid" evidence="4">
    <location>
        <position position="104"/>
    </location>
</feature>
<feature type="modified residue" description="Phenylalanine amide" evidence="4">
    <location>
        <position position="110"/>
    </location>
</feature>
<feature type="modified residue" description="Pyrrolidone carboxylic acid" evidence="4">
    <location>
        <position position="117"/>
    </location>
</feature>
<feature type="modified residue" description="Phenylalanine amide" evidence="4">
    <location>
        <position position="123"/>
    </location>
</feature>
<feature type="modified residue" description="Pyrrolidone carboxylic acid" evidence="4">
    <location>
        <position position="130"/>
    </location>
</feature>
<feature type="modified residue" description="Phenylalanine amide" evidence="4">
    <location>
        <position position="136"/>
    </location>
</feature>
<feature type="modified residue" description="Pyrrolidone carboxylic acid" evidence="4">
    <location>
        <position position="143"/>
    </location>
</feature>
<feature type="modified residue" description="Phenylalanine amide" evidence="4">
    <location>
        <position position="149"/>
    </location>
</feature>
<feature type="modified residue" description="Pyrrolidone carboxylic acid" evidence="4">
    <location>
        <position position="169"/>
    </location>
</feature>
<feature type="modified residue" description="Phenylalanine amide" evidence="4">
    <location>
        <position position="175"/>
    </location>
</feature>
<feature type="modified residue" description="Pyrrolidone carboxylic acid" evidence="3 4">
    <location>
        <position position="182"/>
    </location>
</feature>
<feature type="modified residue" description="Phenylalanine amide" evidence="3 4">
    <location>
        <position position="188"/>
    </location>
</feature>
<feature type="modified residue" description="Pyrrolidone carboxylic acid" evidence="4">
    <location>
        <position position="195"/>
    </location>
</feature>
<feature type="modified residue" description="Histidine amide" evidence="4">
    <location>
        <position position="201"/>
    </location>
</feature>
<feature type="modified residue" description="Pyrrolidone carboxylic acid" evidence="4">
    <location>
        <position position="208"/>
    </location>
</feature>
<feature type="modified residue" description="Phenylalanine amide" evidence="4">
    <location>
        <position position="214"/>
    </location>
</feature>
<feature type="modified residue" description="Pyrrolidone carboxylic acid" evidence="4">
    <location>
        <position position="221"/>
    </location>
</feature>
<feature type="modified residue" description="Phenylalanine amide" evidence="4">
    <location>
        <position position="227"/>
    </location>
</feature>